<protein>
    <recommendedName>
        <fullName evidence="1">Bifunctional protein GlmU</fullName>
    </recommendedName>
    <domain>
        <recommendedName>
            <fullName evidence="1">UDP-N-acetylglucosamine pyrophosphorylase</fullName>
            <ecNumber evidence="1">2.7.7.23</ecNumber>
        </recommendedName>
        <alternativeName>
            <fullName evidence="1">N-acetylglucosamine-1-phosphate uridyltransferase</fullName>
        </alternativeName>
    </domain>
    <domain>
        <recommendedName>
            <fullName evidence="1">Glucosamine-1-phosphate N-acetyltransferase</fullName>
            <ecNumber evidence="1">2.3.1.157</ecNumber>
        </recommendedName>
    </domain>
</protein>
<name>GLMU_SHEON</name>
<feature type="chain" id="PRO_0000233839" description="Bifunctional protein GlmU">
    <location>
        <begin position="1"/>
        <end position="454"/>
    </location>
</feature>
<feature type="region of interest" description="Pyrophosphorylase" evidence="1">
    <location>
        <begin position="1"/>
        <end position="226"/>
    </location>
</feature>
<feature type="region of interest" description="Linker" evidence="1">
    <location>
        <begin position="227"/>
        <end position="247"/>
    </location>
</feature>
<feature type="region of interest" description="N-acetyltransferase" evidence="1">
    <location>
        <begin position="248"/>
        <end position="454"/>
    </location>
</feature>
<feature type="active site" description="Proton acceptor" evidence="1">
    <location>
        <position position="360"/>
    </location>
</feature>
<feature type="binding site" evidence="1">
    <location>
        <begin position="8"/>
        <end position="11"/>
    </location>
    <ligand>
        <name>UDP-N-acetyl-alpha-D-glucosamine</name>
        <dbReference type="ChEBI" id="CHEBI:57705"/>
    </ligand>
</feature>
<feature type="binding site" evidence="1">
    <location>
        <position position="22"/>
    </location>
    <ligand>
        <name>UDP-N-acetyl-alpha-D-glucosamine</name>
        <dbReference type="ChEBI" id="CHEBI:57705"/>
    </ligand>
</feature>
<feature type="binding site" evidence="1">
    <location>
        <position position="73"/>
    </location>
    <ligand>
        <name>UDP-N-acetyl-alpha-D-glucosamine</name>
        <dbReference type="ChEBI" id="CHEBI:57705"/>
    </ligand>
</feature>
<feature type="binding site" evidence="1">
    <location>
        <begin position="78"/>
        <end position="79"/>
    </location>
    <ligand>
        <name>UDP-N-acetyl-alpha-D-glucosamine</name>
        <dbReference type="ChEBI" id="CHEBI:57705"/>
    </ligand>
</feature>
<feature type="binding site" evidence="1">
    <location>
        <begin position="100"/>
        <end position="102"/>
    </location>
    <ligand>
        <name>UDP-N-acetyl-alpha-D-glucosamine</name>
        <dbReference type="ChEBI" id="CHEBI:57705"/>
    </ligand>
</feature>
<feature type="binding site" evidence="1">
    <location>
        <position position="102"/>
    </location>
    <ligand>
        <name>Mg(2+)</name>
        <dbReference type="ChEBI" id="CHEBI:18420"/>
    </ligand>
</feature>
<feature type="binding site" evidence="1">
    <location>
        <position position="137"/>
    </location>
    <ligand>
        <name>UDP-N-acetyl-alpha-D-glucosamine</name>
        <dbReference type="ChEBI" id="CHEBI:57705"/>
    </ligand>
</feature>
<feature type="binding site" evidence="1">
    <location>
        <position position="151"/>
    </location>
    <ligand>
        <name>UDP-N-acetyl-alpha-D-glucosamine</name>
        <dbReference type="ChEBI" id="CHEBI:57705"/>
    </ligand>
</feature>
<feature type="binding site" evidence="1">
    <location>
        <position position="166"/>
    </location>
    <ligand>
        <name>UDP-N-acetyl-alpha-D-glucosamine</name>
        <dbReference type="ChEBI" id="CHEBI:57705"/>
    </ligand>
</feature>
<feature type="binding site" evidence="1">
    <location>
        <position position="224"/>
    </location>
    <ligand>
        <name>Mg(2+)</name>
        <dbReference type="ChEBI" id="CHEBI:18420"/>
    </ligand>
</feature>
<feature type="binding site" evidence="1">
    <location>
        <position position="224"/>
    </location>
    <ligand>
        <name>UDP-N-acetyl-alpha-D-glucosamine</name>
        <dbReference type="ChEBI" id="CHEBI:57705"/>
    </ligand>
</feature>
<feature type="binding site" evidence="1">
    <location>
        <position position="330"/>
    </location>
    <ligand>
        <name>UDP-N-acetyl-alpha-D-glucosamine</name>
        <dbReference type="ChEBI" id="CHEBI:57705"/>
    </ligand>
</feature>
<feature type="binding site" evidence="1">
    <location>
        <position position="348"/>
    </location>
    <ligand>
        <name>UDP-N-acetyl-alpha-D-glucosamine</name>
        <dbReference type="ChEBI" id="CHEBI:57705"/>
    </ligand>
</feature>
<feature type="binding site" evidence="1">
    <location>
        <position position="363"/>
    </location>
    <ligand>
        <name>UDP-N-acetyl-alpha-D-glucosamine</name>
        <dbReference type="ChEBI" id="CHEBI:57705"/>
    </ligand>
</feature>
<feature type="binding site" evidence="1">
    <location>
        <position position="374"/>
    </location>
    <ligand>
        <name>UDP-N-acetyl-alpha-D-glucosamine</name>
        <dbReference type="ChEBI" id="CHEBI:57705"/>
    </ligand>
</feature>
<feature type="binding site" evidence="1">
    <location>
        <position position="377"/>
    </location>
    <ligand>
        <name>acetyl-CoA</name>
        <dbReference type="ChEBI" id="CHEBI:57288"/>
    </ligand>
</feature>
<feature type="binding site" evidence="1">
    <location>
        <begin position="383"/>
        <end position="384"/>
    </location>
    <ligand>
        <name>acetyl-CoA</name>
        <dbReference type="ChEBI" id="CHEBI:57288"/>
    </ligand>
</feature>
<feature type="binding site" evidence="1">
    <location>
        <position position="402"/>
    </location>
    <ligand>
        <name>acetyl-CoA</name>
        <dbReference type="ChEBI" id="CHEBI:57288"/>
    </ligand>
</feature>
<feature type="binding site" evidence="1">
    <location>
        <position position="420"/>
    </location>
    <ligand>
        <name>acetyl-CoA</name>
        <dbReference type="ChEBI" id="CHEBI:57288"/>
    </ligand>
</feature>
<feature type="binding site" evidence="1">
    <location>
        <position position="437"/>
    </location>
    <ligand>
        <name>acetyl-CoA</name>
        <dbReference type="ChEBI" id="CHEBI:57288"/>
    </ligand>
</feature>
<comment type="function">
    <text evidence="1">Catalyzes the last two sequential reactions in the de novo biosynthetic pathway for UDP-N-acetylglucosamine (UDP-GlcNAc). The C-terminal domain catalyzes the transfer of acetyl group from acetyl coenzyme A to glucosamine-1-phosphate (GlcN-1-P) to produce N-acetylglucosamine-1-phosphate (GlcNAc-1-P), which is converted into UDP-GlcNAc by the transfer of uridine 5-monophosphate (from uridine 5-triphosphate), a reaction catalyzed by the N-terminal domain.</text>
</comment>
<comment type="catalytic activity">
    <reaction evidence="1">
        <text>alpha-D-glucosamine 1-phosphate + acetyl-CoA = N-acetyl-alpha-D-glucosamine 1-phosphate + CoA + H(+)</text>
        <dbReference type="Rhea" id="RHEA:13725"/>
        <dbReference type="ChEBI" id="CHEBI:15378"/>
        <dbReference type="ChEBI" id="CHEBI:57287"/>
        <dbReference type="ChEBI" id="CHEBI:57288"/>
        <dbReference type="ChEBI" id="CHEBI:57776"/>
        <dbReference type="ChEBI" id="CHEBI:58516"/>
        <dbReference type="EC" id="2.3.1.157"/>
    </reaction>
</comment>
<comment type="catalytic activity">
    <reaction evidence="1">
        <text>N-acetyl-alpha-D-glucosamine 1-phosphate + UTP + H(+) = UDP-N-acetyl-alpha-D-glucosamine + diphosphate</text>
        <dbReference type="Rhea" id="RHEA:13509"/>
        <dbReference type="ChEBI" id="CHEBI:15378"/>
        <dbReference type="ChEBI" id="CHEBI:33019"/>
        <dbReference type="ChEBI" id="CHEBI:46398"/>
        <dbReference type="ChEBI" id="CHEBI:57705"/>
        <dbReference type="ChEBI" id="CHEBI:57776"/>
        <dbReference type="EC" id="2.7.7.23"/>
    </reaction>
</comment>
<comment type="cofactor">
    <cofactor evidence="1">
        <name>Mg(2+)</name>
        <dbReference type="ChEBI" id="CHEBI:18420"/>
    </cofactor>
    <text evidence="1">Binds 1 Mg(2+) ion per subunit.</text>
</comment>
<comment type="pathway">
    <text evidence="1">Nucleotide-sugar biosynthesis; UDP-N-acetyl-alpha-D-glucosamine biosynthesis; N-acetyl-alpha-D-glucosamine 1-phosphate from alpha-D-glucosamine 6-phosphate (route II): step 2/2.</text>
</comment>
<comment type="pathway">
    <text evidence="1">Nucleotide-sugar biosynthesis; UDP-N-acetyl-alpha-D-glucosamine biosynthesis; UDP-N-acetyl-alpha-D-glucosamine from N-acetyl-alpha-D-glucosamine 1-phosphate: step 1/1.</text>
</comment>
<comment type="pathway">
    <text evidence="1">Bacterial outer membrane biogenesis; LPS lipid A biosynthesis.</text>
</comment>
<comment type="subunit">
    <text evidence="1">Homotrimer.</text>
</comment>
<comment type="subcellular location">
    <subcellularLocation>
        <location evidence="1">Cytoplasm</location>
    </subcellularLocation>
</comment>
<comment type="similarity">
    <text evidence="1">In the N-terminal section; belongs to the N-acetylglucosamine-1-phosphate uridyltransferase family.</text>
</comment>
<comment type="similarity">
    <text evidence="1">In the C-terminal section; belongs to the transferase hexapeptide repeat family.</text>
</comment>
<reference key="1">
    <citation type="journal article" date="2002" name="Nat. Biotechnol.">
        <title>Genome sequence of the dissimilatory metal ion-reducing bacterium Shewanella oneidensis.</title>
        <authorList>
            <person name="Heidelberg J.F."/>
            <person name="Paulsen I.T."/>
            <person name="Nelson K.E."/>
            <person name="Gaidos E.J."/>
            <person name="Nelson W.C."/>
            <person name="Read T.D."/>
            <person name="Eisen J.A."/>
            <person name="Seshadri R."/>
            <person name="Ward N.L."/>
            <person name="Methe B.A."/>
            <person name="Clayton R.A."/>
            <person name="Meyer T."/>
            <person name="Tsapin A."/>
            <person name="Scott J."/>
            <person name="Beanan M.J."/>
            <person name="Brinkac L.M."/>
            <person name="Daugherty S.C."/>
            <person name="DeBoy R.T."/>
            <person name="Dodson R.J."/>
            <person name="Durkin A.S."/>
            <person name="Haft D.H."/>
            <person name="Kolonay J.F."/>
            <person name="Madupu R."/>
            <person name="Peterson J.D."/>
            <person name="Umayam L.A."/>
            <person name="White O."/>
            <person name="Wolf A.M."/>
            <person name="Vamathevan J.J."/>
            <person name="Weidman J.F."/>
            <person name="Impraim M."/>
            <person name="Lee K."/>
            <person name="Berry K.J."/>
            <person name="Lee C."/>
            <person name="Mueller J."/>
            <person name="Khouri H.M."/>
            <person name="Gill J."/>
            <person name="Utterback T.R."/>
            <person name="McDonald L.A."/>
            <person name="Feldblyum T.V."/>
            <person name="Smith H.O."/>
            <person name="Venter J.C."/>
            <person name="Nealson K.H."/>
            <person name="Fraser C.M."/>
        </authorList>
    </citation>
    <scope>NUCLEOTIDE SEQUENCE [LARGE SCALE GENOMIC DNA]</scope>
    <source>
        <strain>ATCC 700550 / JCM 31522 / CIP 106686 / LMG 19005 / NCIMB 14063 / MR-1</strain>
    </source>
</reference>
<gene>
    <name evidence="1" type="primary">glmU</name>
    <name type="ordered locus">SO_4745</name>
</gene>
<keyword id="KW-0012">Acyltransferase</keyword>
<keyword id="KW-0133">Cell shape</keyword>
<keyword id="KW-0961">Cell wall biogenesis/degradation</keyword>
<keyword id="KW-0963">Cytoplasm</keyword>
<keyword id="KW-0460">Magnesium</keyword>
<keyword id="KW-0479">Metal-binding</keyword>
<keyword id="KW-0511">Multifunctional enzyme</keyword>
<keyword id="KW-0548">Nucleotidyltransferase</keyword>
<keyword id="KW-0573">Peptidoglycan synthesis</keyword>
<keyword id="KW-1185">Reference proteome</keyword>
<keyword id="KW-0677">Repeat</keyword>
<keyword id="KW-0808">Transferase</keyword>
<organism>
    <name type="scientific">Shewanella oneidensis (strain ATCC 700550 / JCM 31522 / CIP 106686 / LMG 19005 / NCIMB 14063 / MR-1)</name>
    <dbReference type="NCBI Taxonomy" id="211586"/>
    <lineage>
        <taxon>Bacteria</taxon>
        <taxon>Pseudomonadati</taxon>
        <taxon>Pseudomonadota</taxon>
        <taxon>Gammaproteobacteria</taxon>
        <taxon>Alteromonadales</taxon>
        <taxon>Shewanellaceae</taxon>
        <taxon>Shewanella</taxon>
    </lineage>
</organism>
<evidence type="ECO:0000255" key="1">
    <source>
        <dbReference type="HAMAP-Rule" id="MF_01631"/>
    </source>
</evidence>
<accession>Q8E8C2</accession>
<dbReference type="EC" id="2.7.7.23" evidence="1"/>
<dbReference type="EC" id="2.3.1.157" evidence="1"/>
<dbReference type="EMBL" id="AE014299">
    <property type="protein sequence ID" value="AAN57704.1"/>
    <property type="molecule type" value="Genomic_DNA"/>
</dbReference>
<dbReference type="RefSeq" id="NP_720261.1">
    <property type="nucleotide sequence ID" value="NC_004347.2"/>
</dbReference>
<dbReference type="RefSeq" id="WP_011074328.1">
    <property type="nucleotide sequence ID" value="NC_004347.2"/>
</dbReference>
<dbReference type="SMR" id="Q8E8C2"/>
<dbReference type="STRING" id="211586.SO_4745"/>
<dbReference type="PaxDb" id="211586-SO_4745"/>
<dbReference type="KEGG" id="son:SO_4745"/>
<dbReference type="PATRIC" id="fig|211586.12.peg.4601"/>
<dbReference type="eggNOG" id="COG1207">
    <property type="taxonomic scope" value="Bacteria"/>
</dbReference>
<dbReference type="HOGENOM" id="CLU_029499_15_2_6"/>
<dbReference type="OrthoDB" id="9775031at2"/>
<dbReference type="PhylomeDB" id="Q8E8C2"/>
<dbReference type="BioCyc" id="SONE211586:G1GMP-4390-MONOMER"/>
<dbReference type="UniPathway" id="UPA00113">
    <property type="reaction ID" value="UER00532"/>
</dbReference>
<dbReference type="UniPathway" id="UPA00113">
    <property type="reaction ID" value="UER00533"/>
</dbReference>
<dbReference type="UniPathway" id="UPA00973"/>
<dbReference type="Proteomes" id="UP000008186">
    <property type="component" value="Chromosome"/>
</dbReference>
<dbReference type="GO" id="GO:0005737">
    <property type="term" value="C:cytoplasm"/>
    <property type="evidence" value="ECO:0007669"/>
    <property type="project" value="UniProtKB-SubCell"/>
</dbReference>
<dbReference type="GO" id="GO:0016020">
    <property type="term" value="C:membrane"/>
    <property type="evidence" value="ECO:0007669"/>
    <property type="project" value="GOC"/>
</dbReference>
<dbReference type="GO" id="GO:0019134">
    <property type="term" value="F:glucosamine-1-phosphate N-acetyltransferase activity"/>
    <property type="evidence" value="ECO:0007669"/>
    <property type="project" value="UniProtKB-UniRule"/>
</dbReference>
<dbReference type="GO" id="GO:0000287">
    <property type="term" value="F:magnesium ion binding"/>
    <property type="evidence" value="ECO:0007669"/>
    <property type="project" value="UniProtKB-UniRule"/>
</dbReference>
<dbReference type="GO" id="GO:0003977">
    <property type="term" value="F:UDP-N-acetylglucosamine diphosphorylase activity"/>
    <property type="evidence" value="ECO:0007669"/>
    <property type="project" value="UniProtKB-UniRule"/>
</dbReference>
<dbReference type="GO" id="GO:0000902">
    <property type="term" value="P:cell morphogenesis"/>
    <property type="evidence" value="ECO:0007669"/>
    <property type="project" value="UniProtKB-UniRule"/>
</dbReference>
<dbReference type="GO" id="GO:0071555">
    <property type="term" value="P:cell wall organization"/>
    <property type="evidence" value="ECO:0007669"/>
    <property type="project" value="UniProtKB-KW"/>
</dbReference>
<dbReference type="GO" id="GO:0009245">
    <property type="term" value="P:lipid A biosynthetic process"/>
    <property type="evidence" value="ECO:0007669"/>
    <property type="project" value="UniProtKB-UniRule"/>
</dbReference>
<dbReference type="GO" id="GO:0009252">
    <property type="term" value="P:peptidoglycan biosynthetic process"/>
    <property type="evidence" value="ECO:0007669"/>
    <property type="project" value="UniProtKB-UniRule"/>
</dbReference>
<dbReference type="GO" id="GO:0008360">
    <property type="term" value="P:regulation of cell shape"/>
    <property type="evidence" value="ECO:0007669"/>
    <property type="project" value="UniProtKB-KW"/>
</dbReference>
<dbReference type="GO" id="GO:0006048">
    <property type="term" value="P:UDP-N-acetylglucosamine biosynthetic process"/>
    <property type="evidence" value="ECO:0007669"/>
    <property type="project" value="UniProtKB-UniPathway"/>
</dbReference>
<dbReference type="CDD" id="cd02540">
    <property type="entry name" value="GT2_GlmU_N_bac"/>
    <property type="match status" value="1"/>
</dbReference>
<dbReference type="CDD" id="cd03353">
    <property type="entry name" value="LbH_GlmU_C"/>
    <property type="match status" value="1"/>
</dbReference>
<dbReference type="Gene3D" id="2.160.10.10">
    <property type="entry name" value="Hexapeptide repeat proteins"/>
    <property type="match status" value="1"/>
</dbReference>
<dbReference type="Gene3D" id="3.90.550.10">
    <property type="entry name" value="Spore Coat Polysaccharide Biosynthesis Protein SpsA, Chain A"/>
    <property type="match status" value="1"/>
</dbReference>
<dbReference type="HAMAP" id="MF_01631">
    <property type="entry name" value="GlmU"/>
    <property type="match status" value="1"/>
</dbReference>
<dbReference type="InterPro" id="IPR005882">
    <property type="entry name" value="Bifunctional_GlmU"/>
</dbReference>
<dbReference type="InterPro" id="IPR050065">
    <property type="entry name" value="GlmU-like"/>
</dbReference>
<dbReference type="InterPro" id="IPR038009">
    <property type="entry name" value="GlmU_C_LbH"/>
</dbReference>
<dbReference type="InterPro" id="IPR001451">
    <property type="entry name" value="Hexapep"/>
</dbReference>
<dbReference type="InterPro" id="IPR018357">
    <property type="entry name" value="Hexapep_transf_CS"/>
</dbReference>
<dbReference type="InterPro" id="IPR025877">
    <property type="entry name" value="MobA-like_NTP_Trfase"/>
</dbReference>
<dbReference type="InterPro" id="IPR029044">
    <property type="entry name" value="Nucleotide-diphossugar_trans"/>
</dbReference>
<dbReference type="InterPro" id="IPR011004">
    <property type="entry name" value="Trimer_LpxA-like_sf"/>
</dbReference>
<dbReference type="NCBIfam" id="TIGR01173">
    <property type="entry name" value="glmU"/>
    <property type="match status" value="1"/>
</dbReference>
<dbReference type="NCBIfam" id="NF006986">
    <property type="entry name" value="PRK09451.1"/>
    <property type="match status" value="1"/>
</dbReference>
<dbReference type="PANTHER" id="PTHR43584:SF3">
    <property type="entry name" value="BIFUNCTIONAL PROTEIN GLMU"/>
    <property type="match status" value="1"/>
</dbReference>
<dbReference type="PANTHER" id="PTHR43584">
    <property type="entry name" value="NUCLEOTIDYL TRANSFERASE"/>
    <property type="match status" value="1"/>
</dbReference>
<dbReference type="Pfam" id="PF00132">
    <property type="entry name" value="Hexapep"/>
    <property type="match status" value="1"/>
</dbReference>
<dbReference type="Pfam" id="PF12804">
    <property type="entry name" value="NTP_transf_3"/>
    <property type="match status" value="1"/>
</dbReference>
<dbReference type="SUPFAM" id="SSF53448">
    <property type="entry name" value="Nucleotide-diphospho-sugar transferases"/>
    <property type="match status" value="1"/>
</dbReference>
<dbReference type="SUPFAM" id="SSF51161">
    <property type="entry name" value="Trimeric LpxA-like enzymes"/>
    <property type="match status" value="1"/>
</dbReference>
<dbReference type="PROSITE" id="PS00101">
    <property type="entry name" value="HEXAPEP_TRANSFERASES"/>
    <property type="match status" value="1"/>
</dbReference>
<proteinExistence type="inferred from homology"/>
<sequence length="454" mass="48153">MALNVVILAAGKGTRMRSDLPKVLHPIAHKSMVQHVIDTAHSIGSDAIQLVYGYGADKLKSTLGEQKLNWILQAEQLGTGHAVAQAIPNIDDNDTVLILYGDVPLIQASTLEALLAARPEYGVAILTVNLANPMGYGRIVREQGKVVGIVEQKDANPEQLAINEVNTGIMAVPGNALKTWLDRLSNNNAQGEYYLTDIIAMAHADGVEINTAQPQSAIEVEGANNRVQLAQLERAYQAREAEKLMIAGANLRDPSRIDIRGEVTVGMDVMIDVNVIFEGKVVIGNNVTIGAGAIIIDTEIADNAEIKPYSIIEGAKLGVAASAGPFARLRPGAELMQDAHIGNFVEMKKAVLGVGSKAGHLAYLGDAQIGAGVNIGAGTITCNYDGANKHLTVIEDNVFVGSDTQLVAPVTIGKGATLGAGSTITRDVGEDELVITRVKQKHLTGWQRPVKIKK</sequence>